<sequence length="630" mass="68346">MALTSAASTDAPPTTGFWALTLGGVGVVFGDIGTSPLYAFREAVHVAAEGAQVTRVIVLGVLSLILWSLFIVVTAKYVLLLLRADNNGEGGTLSLMALGQRAIGRRSVFLMSLGVIGASMFIGDSMITPAISVLSAVEGLKIAAPALEHYVVPLTVGILVVLFAFQRWGTARVASAFGPVMIVWFSTLAVMGLIHINDDPSVLAAINPWHAVHFMLSHGMVGLVTIGAVFLAVTGGEALYADLGHFGRKPIQTGWLFFVLPSLLINYFGQGALVLSHPEAVENTFYRMVPESFLVPLIVLATAATVIASQAVITGAFSLISQAVQLGLLPRFEVRYTSETHAGQIYLPRVNMLLLIGVLMLVLLFRNSSGLASAYGIAVSTTMVADGVMGFVVIWKLWGWRPAAAAALIFPFVAVDAIFFSANLLKLLEGAWVPLLFGLLMATLIWVWRRGSAMLILKTRRTEVPLNDLIQSLEKRPPHIVKGTAVFLTSDPEYVPTALLHNLKHNKVLHEHNVILTIQTAQTPRVDPAERVTMENISDKFSKVRLRFGYMESPNVPKALVIARKLGWQFDIMSTSFFVSRRSLKPAAQSGLPRWQNHLFIALSRSANDATDYFQIPTGRVVEVGTQVTI</sequence>
<evidence type="ECO:0000255" key="1">
    <source>
        <dbReference type="HAMAP-Rule" id="MF_01522"/>
    </source>
</evidence>
<organism>
    <name type="scientific">Rhodopseudomonas palustris (strain BisB18)</name>
    <dbReference type="NCBI Taxonomy" id="316056"/>
    <lineage>
        <taxon>Bacteria</taxon>
        <taxon>Pseudomonadati</taxon>
        <taxon>Pseudomonadota</taxon>
        <taxon>Alphaproteobacteria</taxon>
        <taxon>Hyphomicrobiales</taxon>
        <taxon>Nitrobacteraceae</taxon>
        <taxon>Rhodopseudomonas</taxon>
    </lineage>
</organism>
<name>KUP2_RHOPB</name>
<proteinExistence type="inferred from homology"/>
<dbReference type="EMBL" id="CP000301">
    <property type="protein sequence ID" value="ABD87656.1"/>
    <property type="molecule type" value="Genomic_DNA"/>
</dbReference>
<dbReference type="STRING" id="316056.RPC_2102"/>
<dbReference type="KEGG" id="rpc:RPC_2102"/>
<dbReference type="eggNOG" id="COG3158">
    <property type="taxonomic scope" value="Bacteria"/>
</dbReference>
<dbReference type="HOGENOM" id="CLU_008142_4_2_5"/>
<dbReference type="OrthoDB" id="9805577at2"/>
<dbReference type="GO" id="GO:0005886">
    <property type="term" value="C:plasma membrane"/>
    <property type="evidence" value="ECO:0007669"/>
    <property type="project" value="UniProtKB-SubCell"/>
</dbReference>
<dbReference type="GO" id="GO:0015079">
    <property type="term" value="F:potassium ion transmembrane transporter activity"/>
    <property type="evidence" value="ECO:0007669"/>
    <property type="project" value="UniProtKB-UniRule"/>
</dbReference>
<dbReference type="GO" id="GO:0015293">
    <property type="term" value="F:symporter activity"/>
    <property type="evidence" value="ECO:0007669"/>
    <property type="project" value="UniProtKB-UniRule"/>
</dbReference>
<dbReference type="HAMAP" id="MF_01522">
    <property type="entry name" value="Kup"/>
    <property type="match status" value="1"/>
</dbReference>
<dbReference type="InterPro" id="IPR003855">
    <property type="entry name" value="K+_transporter"/>
</dbReference>
<dbReference type="InterPro" id="IPR053952">
    <property type="entry name" value="K_trans_C"/>
</dbReference>
<dbReference type="InterPro" id="IPR053951">
    <property type="entry name" value="K_trans_N"/>
</dbReference>
<dbReference type="InterPro" id="IPR023051">
    <property type="entry name" value="Kup"/>
</dbReference>
<dbReference type="PANTHER" id="PTHR30540:SF79">
    <property type="entry name" value="LOW AFFINITY POTASSIUM TRANSPORT SYSTEM PROTEIN KUP"/>
    <property type="match status" value="1"/>
</dbReference>
<dbReference type="PANTHER" id="PTHR30540">
    <property type="entry name" value="OSMOTIC STRESS POTASSIUM TRANSPORTER"/>
    <property type="match status" value="1"/>
</dbReference>
<dbReference type="Pfam" id="PF02705">
    <property type="entry name" value="K_trans"/>
    <property type="match status" value="1"/>
</dbReference>
<dbReference type="Pfam" id="PF22776">
    <property type="entry name" value="K_trans_C"/>
    <property type="match status" value="1"/>
</dbReference>
<reference key="1">
    <citation type="submission" date="2006-03" db="EMBL/GenBank/DDBJ databases">
        <title>Complete sequence of Rhodopseudomonas palustris BisB18.</title>
        <authorList>
            <consortium name="US DOE Joint Genome Institute"/>
            <person name="Copeland A."/>
            <person name="Lucas S."/>
            <person name="Lapidus A."/>
            <person name="Barry K."/>
            <person name="Detter J.C."/>
            <person name="Glavina del Rio T."/>
            <person name="Hammon N."/>
            <person name="Israni S."/>
            <person name="Dalin E."/>
            <person name="Tice H."/>
            <person name="Pitluck S."/>
            <person name="Chain P."/>
            <person name="Malfatti S."/>
            <person name="Shin M."/>
            <person name="Vergez L."/>
            <person name="Schmutz J."/>
            <person name="Larimer F."/>
            <person name="Land M."/>
            <person name="Hauser L."/>
            <person name="Pelletier D.A."/>
            <person name="Kyrpides N."/>
            <person name="Anderson I."/>
            <person name="Oda Y."/>
            <person name="Harwood C.S."/>
            <person name="Richardson P."/>
        </authorList>
    </citation>
    <scope>NUCLEOTIDE SEQUENCE [LARGE SCALE GENOMIC DNA]</scope>
    <source>
        <strain>BisB18</strain>
    </source>
</reference>
<gene>
    <name evidence="1" type="primary">kup2</name>
    <name type="ordered locus">RPC_2102</name>
</gene>
<accession>Q216N0</accession>
<comment type="function">
    <text evidence="1">Transport of potassium into the cell. Likely operates as a K(+):H(+) symporter.</text>
</comment>
<comment type="catalytic activity">
    <reaction evidence="1">
        <text>K(+)(in) + H(+)(in) = K(+)(out) + H(+)(out)</text>
        <dbReference type="Rhea" id="RHEA:28490"/>
        <dbReference type="ChEBI" id="CHEBI:15378"/>
        <dbReference type="ChEBI" id="CHEBI:29103"/>
    </reaction>
    <physiologicalReaction direction="right-to-left" evidence="1">
        <dbReference type="Rhea" id="RHEA:28492"/>
    </physiologicalReaction>
</comment>
<comment type="subcellular location">
    <subcellularLocation>
        <location evidence="1">Cell inner membrane</location>
        <topology evidence="1">Multi-pass membrane protein</topology>
    </subcellularLocation>
</comment>
<comment type="similarity">
    <text evidence="1">Belongs to the HAK/KUP transporter (TC 2.A.72) family.</text>
</comment>
<feature type="chain" id="PRO_0000279826" description="Probable potassium transport system protein Kup 2">
    <location>
        <begin position="1"/>
        <end position="630"/>
    </location>
</feature>
<feature type="transmembrane region" description="Helical" evidence="1">
    <location>
        <begin position="17"/>
        <end position="37"/>
    </location>
</feature>
<feature type="transmembrane region" description="Helical" evidence="1">
    <location>
        <begin position="56"/>
        <end position="76"/>
    </location>
</feature>
<feature type="transmembrane region" description="Helical" evidence="1">
    <location>
        <begin position="108"/>
        <end position="128"/>
    </location>
</feature>
<feature type="transmembrane region" description="Helical" evidence="1">
    <location>
        <begin position="145"/>
        <end position="165"/>
    </location>
</feature>
<feature type="transmembrane region" description="Helical" evidence="1">
    <location>
        <begin position="176"/>
        <end position="196"/>
    </location>
</feature>
<feature type="transmembrane region" description="Helical" evidence="1">
    <location>
        <begin position="214"/>
        <end position="234"/>
    </location>
</feature>
<feature type="transmembrane region" description="Helical" evidence="1">
    <location>
        <begin position="255"/>
        <end position="275"/>
    </location>
</feature>
<feature type="transmembrane region" description="Helical" evidence="1">
    <location>
        <begin position="293"/>
        <end position="313"/>
    </location>
</feature>
<feature type="transmembrane region" description="Helical" evidence="1">
    <location>
        <begin position="345"/>
        <end position="365"/>
    </location>
</feature>
<feature type="transmembrane region" description="Helical" evidence="1">
    <location>
        <begin position="375"/>
        <end position="395"/>
    </location>
</feature>
<feature type="transmembrane region" description="Helical" evidence="1">
    <location>
        <begin position="402"/>
        <end position="422"/>
    </location>
</feature>
<feature type="transmembrane region" description="Helical" evidence="1">
    <location>
        <begin position="427"/>
        <end position="447"/>
    </location>
</feature>
<protein>
    <recommendedName>
        <fullName evidence="1">Probable potassium transport system protein Kup 2</fullName>
    </recommendedName>
</protein>
<keyword id="KW-0997">Cell inner membrane</keyword>
<keyword id="KW-1003">Cell membrane</keyword>
<keyword id="KW-0406">Ion transport</keyword>
<keyword id="KW-0472">Membrane</keyword>
<keyword id="KW-0630">Potassium</keyword>
<keyword id="KW-0633">Potassium transport</keyword>
<keyword id="KW-0769">Symport</keyword>
<keyword id="KW-0812">Transmembrane</keyword>
<keyword id="KW-1133">Transmembrane helix</keyword>
<keyword id="KW-0813">Transport</keyword>